<accession>G5EE01</accession>
<dbReference type="EC" id="3.1.3.16" evidence="1"/>
<dbReference type="EC" id="3.1.3.48" evidence="14"/>
<dbReference type="EC" id="3.1.3.67" evidence="26"/>
<dbReference type="EMBL" id="AJ131181">
    <property type="protein sequence ID" value="CAA10315.1"/>
    <property type="molecule type" value="mRNA"/>
</dbReference>
<dbReference type="EMBL" id="AF098286">
    <property type="protein sequence ID" value="AAD03420.1"/>
    <property type="molecule type" value="mRNA"/>
</dbReference>
<dbReference type="EMBL" id="AF126286">
    <property type="protein sequence ID" value="AAD21620.1"/>
    <property type="molecule type" value="mRNA"/>
</dbReference>
<dbReference type="EMBL" id="BX284604">
    <property type="protein sequence ID" value="CCD73977.1"/>
    <property type="molecule type" value="Genomic_DNA"/>
</dbReference>
<dbReference type="PIR" id="T51924">
    <property type="entry name" value="T51924"/>
</dbReference>
<dbReference type="RefSeq" id="NP_499926.1">
    <property type="nucleotide sequence ID" value="NM_067525.7"/>
</dbReference>
<dbReference type="SMR" id="G5EE01"/>
<dbReference type="ComplexPortal" id="CPX-3881">
    <property type="entry name" value="arr-1-mpz-1-daf-18 complex"/>
</dbReference>
<dbReference type="FunCoup" id="G5EE01">
    <property type="interactions" value="395"/>
</dbReference>
<dbReference type="IntAct" id="G5EE01">
    <property type="interactions" value="3"/>
</dbReference>
<dbReference type="STRING" id="6239.T07A9.6.1"/>
<dbReference type="PaxDb" id="6239-T07A9.6"/>
<dbReference type="PeptideAtlas" id="G5EE01"/>
<dbReference type="EnsemblMetazoa" id="T07A9.6.1">
    <property type="protein sequence ID" value="T07A9.6.1"/>
    <property type="gene ID" value="WBGene00000913"/>
</dbReference>
<dbReference type="GeneID" id="176869"/>
<dbReference type="KEGG" id="cel:CELE_T07A9.6"/>
<dbReference type="AGR" id="WB:WBGene00000913"/>
<dbReference type="CTD" id="176869"/>
<dbReference type="WormBase" id="T07A9.6">
    <property type="protein sequence ID" value="CE26385"/>
    <property type="gene ID" value="WBGene00000913"/>
    <property type="gene designation" value="daf-18"/>
</dbReference>
<dbReference type="eggNOG" id="KOG2283">
    <property type="taxonomic scope" value="Eukaryota"/>
</dbReference>
<dbReference type="GeneTree" id="ENSGT00940000163053"/>
<dbReference type="HOGENOM" id="CLU_307414_0_0_1"/>
<dbReference type="InParanoid" id="G5EE01"/>
<dbReference type="OMA" id="LIYPEQL"/>
<dbReference type="OrthoDB" id="16692at2759"/>
<dbReference type="Reactome" id="R-CEL-1660499">
    <property type="pathway name" value="Synthesis of PIPs at the plasma membrane"/>
</dbReference>
<dbReference type="Reactome" id="R-CEL-1855204">
    <property type="pathway name" value="Synthesis of IP3 and IP4 in the cytosol"/>
</dbReference>
<dbReference type="Reactome" id="R-CEL-199418">
    <property type="pathway name" value="Negative regulation of the PI3K/AKT network"/>
</dbReference>
<dbReference type="Reactome" id="R-CEL-202424">
    <property type="pathway name" value="Downstream TCR signaling"/>
</dbReference>
<dbReference type="Reactome" id="R-CEL-5689880">
    <property type="pathway name" value="Ub-specific processing proteases"/>
</dbReference>
<dbReference type="Reactome" id="R-CEL-5689896">
    <property type="pathway name" value="Ovarian tumor domain proteases"/>
</dbReference>
<dbReference type="Reactome" id="R-CEL-8948747">
    <property type="pathway name" value="Regulation of PTEN localization"/>
</dbReference>
<dbReference type="Reactome" id="R-CEL-8948751">
    <property type="pathway name" value="Regulation of PTEN stability and activity"/>
</dbReference>
<dbReference type="SignaLink" id="G5EE01"/>
<dbReference type="PRO" id="PR:G5EE01"/>
<dbReference type="Proteomes" id="UP000001940">
    <property type="component" value="Chromosome IV"/>
</dbReference>
<dbReference type="Bgee" id="WBGene00000913">
    <property type="expression patterns" value="Expressed in germ line (C elegans) and 4 other cell types or tissues"/>
</dbReference>
<dbReference type="GO" id="GO:0030424">
    <property type="term" value="C:axon"/>
    <property type="evidence" value="ECO:0000314"/>
    <property type="project" value="WormBase"/>
</dbReference>
<dbReference type="GO" id="GO:0042995">
    <property type="term" value="C:cell projection"/>
    <property type="evidence" value="ECO:0000318"/>
    <property type="project" value="GO_Central"/>
</dbReference>
<dbReference type="GO" id="GO:0009898">
    <property type="term" value="C:cytoplasmic side of plasma membrane"/>
    <property type="evidence" value="ECO:0000314"/>
    <property type="project" value="WormBase"/>
</dbReference>
<dbReference type="GO" id="GO:0005829">
    <property type="term" value="C:cytosol"/>
    <property type="evidence" value="ECO:0000318"/>
    <property type="project" value="GO_Central"/>
</dbReference>
<dbReference type="GO" id="GO:0030425">
    <property type="term" value="C:dendrite"/>
    <property type="evidence" value="ECO:0000314"/>
    <property type="project" value="WormBase"/>
</dbReference>
<dbReference type="GO" id="GO:0043025">
    <property type="term" value="C:neuronal cell body"/>
    <property type="evidence" value="ECO:0000314"/>
    <property type="project" value="WormBase"/>
</dbReference>
<dbReference type="GO" id="GO:0005634">
    <property type="term" value="C:nucleus"/>
    <property type="evidence" value="ECO:0000314"/>
    <property type="project" value="WormBase"/>
</dbReference>
<dbReference type="GO" id="GO:0043204">
    <property type="term" value="C:perikaryon"/>
    <property type="evidence" value="ECO:0007669"/>
    <property type="project" value="UniProtKB-SubCell"/>
</dbReference>
<dbReference type="GO" id="GO:0005886">
    <property type="term" value="C:plasma membrane"/>
    <property type="evidence" value="ECO:0000314"/>
    <property type="project" value="WormBase"/>
</dbReference>
<dbReference type="GO" id="GO:0062049">
    <property type="term" value="C:protein phosphatase inhibitor complex"/>
    <property type="evidence" value="ECO:0000303"/>
    <property type="project" value="ComplexPortal"/>
</dbReference>
<dbReference type="GO" id="GO:0008289">
    <property type="term" value="F:lipid binding"/>
    <property type="evidence" value="ECO:0007669"/>
    <property type="project" value="UniProtKB-KW"/>
</dbReference>
<dbReference type="GO" id="GO:0016314">
    <property type="term" value="F:phosphatidylinositol-3,4,5-trisphosphate 3-phosphatase activity"/>
    <property type="evidence" value="ECO:0000250"/>
    <property type="project" value="WormBase"/>
</dbReference>
<dbReference type="GO" id="GO:0004722">
    <property type="term" value="F:protein serine/threonine phosphatase activity"/>
    <property type="evidence" value="ECO:0007669"/>
    <property type="project" value="UniProtKB-EC"/>
</dbReference>
<dbReference type="GO" id="GO:0004725">
    <property type="term" value="F:protein tyrosine phosphatase activity"/>
    <property type="evidence" value="ECO:0000315"/>
    <property type="project" value="WormBase"/>
</dbReference>
<dbReference type="GO" id="GO:0048870">
    <property type="term" value="P:cell motility"/>
    <property type="evidence" value="ECO:0000318"/>
    <property type="project" value="GO_Central"/>
</dbReference>
<dbReference type="GO" id="GO:0007635">
    <property type="term" value="P:chemosensory behavior"/>
    <property type="evidence" value="ECO:0000315"/>
    <property type="project" value="UniProtKB"/>
</dbReference>
<dbReference type="GO" id="GO:0006935">
    <property type="term" value="P:chemotaxis"/>
    <property type="evidence" value="ECO:0000316"/>
    <property type="project" value="UniProtKB"/>
</dbReference>
<dbReference type="GO" id="GO:0040024">
    <property type="term" value="P:dauer larval development"/>
    <property type="evidence" value="ECO:0000316"/>
    <property type="project" value="WormBase"/>
</dbReference>
<dbReference type="GO" id="GO:0008340">
    <property type="term" value="P:determination of adult lifespan"/>
    <property type="evidence" value="ECO:0000316"/>
    <property type="project" value="WormBase"/>
</dbReference>
<dbReference type="GO" id="GO:0007611">
    <property type="term" value="P:learning or memory"/>
    <property type="evidence" value="ECO:0000315"/>
    <property type="project" value="WormBase"/>
</dbReference>
<dbReference type="GO" id="GO:0043491">
    <property type="term" value="P:phosphatidylinositol 3-kinase/protein kinase B signal transduction"/>
    <property type="evidence" value="ECO:0000318"/>
    <property type="project" value="GO_Central"/>
</dbReference>
<dbReference type="GO" id="GO:0046856">
    <property type="term" value="P:phosphatidylinositol dephosphorylation"/>
    <property type="evidence" value="ECO:0000318"/>
    <property type="project" value="GO_Central"/>
</dbReference>
<dbReference type="GO" id="GO:0061066">
    <property type="term" value="P:positive regulation of dauer larval development"/>
    <property type="evidence" value="ECO:0000315"/>
    <property type="project" value="WormBase"/>
</dbReference>
<dbReference type="GO" id="GO:0046628">
    <property type="term" value="P:positive regulation of insulin receptor signaling pathway"/>
    <property type="evidence" value="ECO:0000303"/>
    <property type="project" value="ComplexPortal"/>
</dbReference>
<dbReference type="GO" id="GO:0050927">
    <property type="term" value="P:positive regulation of positive chemotaxis"/>
    <property type="evidence" value="ECO:0000315"/>
    <property type="project" value="UniProtKB"/>
</dbReference>
<dbReference type="GO" id="GO:0006606">
    <property type="term" value="P:protein import into nucleus"/>
    <property type="evidence" value="ECO:0000316"/>
    <property type="project" value="WormBase"/>
</dbReference>
<dbReference type="GO" id="GO:0050920">
    <property type="term" value="P:regulation of chemotaxis"/>
    <property type="evidence" value="ECO:0000315"/>
    <property type="project" value="WormBase"/>
</dbReference>
<dbReference type="GO" id="GO:0051896">
    <property type="term" value="P:regulation of phosphatidylinositol 3-kinase/protein kinase B signal transduction"/>
    <property type="evidence" value="ECO:0000318"/>
    <property type="project" value="GO_Central"/>
</dbReference>
<dbReference type="GO" id="GO:0009408">
    <property type="term" value="P:response to heat"/>
    <property type="evidence" value="ECO:0000316"/>
    <property type="project" value="WormBase"/>
</dbReference>
<dbReference type="GO" id="GO:1902074">
    <property type="term" value="P:response to salt"/>
    <property type="evidence" value="ECO:0000315"/>
    <property type="project" value="UniProtKB"/>
</dbReference>
<dbReference type="CDD" id="cd14509">
    <property type="entry name" value="PTP_PTEN"/>
    <property type="match status" value="1"/>
</dbReference>
<dbReference type="Gene3D" id="2.60.40.1110">
    <property type="match status" value="1"/>
</dbReference>
<dbReference type="Gene3D" id="3.90.190.10">
    <property type="entry name" value="Protein tyrosine phosphatase superfamily"/>
    <property type="match status" value="1"/>
</dbReference>
<dbReference type="InterPro" id="IPR051281">
    <property type="entry name" value="Dual-spec_lipid-protein_phosph"/>
</dbReference>
<dbReference type="InterPro" id="IPR029021">
    <property type="entry name" value="Prot-tyrosine_phosphatase-like"/>
</dbReference>
<dbReference type="InterPro" id="IPR045101">
    <property type="entry name" value="PTP_PTEN"/>
</dbReference>
<dbReference type="InterPro" id="IPR014020">
    <property type="entry name" value="Tensin_C2-dom"/>
</dbReference>
<dbReference type="InterPro" id="IPR029023">
    <property type="entry name" value="Tensin_phosphatase"/>
</dbReference>
<dbReference type="InterPro" id="IPR016130">
    <property type="entry name" value="Tyr_Pase_AS"/>
</dbReference>
<dbReference type="InterPro" id="IPR003595">
    <property type="entry name" value="Tyr_Pase_cat"/>
</dbReference>
<dbReference type="InterPro" id="IPR000387">
    <property type="entry name" value="Tyr_Pase_dom"/>
</dbReference>
<dbReference type="PANTHER" id="PTHR12305">
    <property type="entry name" value="PHOSPHATASE WITH HOMOLOGY TO TENSIN"/>
    <property type="match status" value="1"/>
</dbReference>
<dbReference type="PANTHER" id="PTHR12305:SF81">
    <property type="entry name" value="PHOSPHATIDYLINOSITOL 3,4,5-TRISPHOSPHATE 3-PHOSPHATASE AND DUAL-SPECIFICITY PROTEIN PHOSPHATASE PTEN"/>
    <property type="match status" value="1"/>
</dbReference>
<dbReference type="Pfam" id="PF10409">
    <property type="entry name" value="PTEN_C2"/>
    <property type="match status" value="1"/>
</dbReference>
<dbReference type="Pfam" id="PF22785">
    <property type="entry name" value="Tc-R-P"/>
    <property type="match status" value="1"/>
</dbReference>
<dbReference type="SMART" id="SM01326">
    <property type="entry name" value="PTEN_C2"/>
    <property type="match status" value="1"/>
</dbReference>
<dbReference type="SMART" id="SM00404">
    <property type="entry name" value="PTPc_motif"/>
    <property type="match status" value="1"/>
</dbReference>
<dbReference type="SUPFAM" id="SSF52799">
    <property type="entry name" value="(Phosphotyrosine protein) phosphatases II"/>
    <property type="match status" value="1"/>
</dbReference>
<dbReference type="PROSITE" id="PS51181">
    <property type="entry name" value="PPASE_TENSIN"/>
    <property type="match status" value="1"/>
</dbReference>
<dbReference type="PROSITE" id="PS00383">
    <property type="entry name" value="TYR_PHOSPHATASE_1"/>
    <property type="match status" value="1"/>
</dbReference>
<dbReference type="PROSITE" id="PS50056">
    <property type="entry name" value="TYR_PHOSPHATASE_2"/>
    <property type="match status" value="1"/>
</dbReference>
<comment type="function">
    <text evidence="1 5 6 7 10 11 12 13 14 15 16 17 18 19 20 21 22 23 24">Acts as a dual-specificity protein phosphatase, dephosphorylating tyrosine-, serine- and threonine-phosphorylated proteins (By similarity). Also acts as a lipid phosphatase, removing the phosphate in the D3 position of the inositol ring from phosphatidylinositol 3,4,5-trisphosphate (PubMed:15637588). By dephosphorylating PtdIns(3,4,5)P3 antagonizes PtdIns(3,4,5)P3 production by age-1/PI3K and thus, negatively regulates daf-2-mediated processes including dauer formation, longevity, fat metabolism, chemotaxis towards salt, thermotolerance and axon guidance (PubMed:10077613, PubMed:10209098, PubMed:10377431, PubMed:16950159, PubMed:19249087, PubMed:20207731, PubMed:22916022, PubMed:23995781, PubMed:9885576). Similarly, promotes apoptosis during embryonic development by suppressing the recruitment of the prosurvival kinases akt-1/2 to the plasma membrane (PubMed:25383666). In addition, regulates Z2/Z3 germline precursor cell cycle by maintaining them arrested at the G2 stage and by controlling their growth during L1 diapause (PubMed:16631584). After sperm depletion in larvae and adult hermaphrodites, promotes germline stem cell quiescence and oocyte accumulation (PubMed:26552888). By dephosphorylating ephrin-like receptor vab-1 on tyrosine residues, negatively regulates oocyte maturation downstream of vab-1 and upstream of mpk-1, independently of daf-2 (PubMed:19853560). Plays a role in postembryonic muscle arm extensions (PubMed:18436204). Required for neurite outgrowth during AIY interneuron embryonic development (PubMed:22069193). Mainly independently of daf-2, negatively regulates vulva induction probably by inhibiting mpk-1 phosphorylation (PubMed:22916028). Both lipid and protein phosphatase activities are required for the regulation of vulva induction (PubMed:22916028). Plays a role in gonad and germline development following the L1 diapause (PubMed:24746511).</text>
</comment>
<comment type="catalytic activity">
    <reaction evidence="26">
        <text>a 1,2-diacyl-sn-glycero-3-phospho-(1D-myo-inositol-3,4,5-trisphosphate) + H2O = a 1,2-diacyl-sn-glycero-3-phospho-(1D-myo-inositol-4,5-bisphosphate) + phosphate</text>
        <dbReference type="Rhea" id="RHEA:25017"/>
        <dbReference type="ChEBI" id="CHEBI:15377"/>
        <dbReference type="ChEBI" id="CHEBI:43474"/>
        <dbReference type="ChEBI" id="CHEBI:57836"/>
        <dbReference type="ChEBI" id="CHEBI:58456"/>
        <dbReference type="EC" id="3.1.3.67"/>
    </reaction>
</comment>
<comment type="catalytic activity">
    <reaction evidence="1">
        <text>O-phospho-L-seryl-[protein] + H2O = L-seryl-[protein] + phosphate</text>
        <dbReference type="Rhea" id="RHEA:20629"/>
        <dbReference type="Rhea" id="RHEA-COMP:9863"/>
        <dbReference type="Rhea" id="RHEA-COMP:11604"/>
        <dbReference type="ChEBI" id="CHEBI:15377"/>
        <dbReference type="ChEBI" id="CHEBI:29999"/>
        <dbReference type="ChEBI" id="CHEBI:43474"/>
        <dbReference type="ChEBI" id="CHEBI:83421"/>
        <dbReference type="EC" id="3.1.3.16"/>
    </reaction>
</comment>
<comment type="catalytic activity">
    <reaction evidence="1">
        <text>O-phospho-L-threonyl-[protein] + H2O = L-threonyl-[protein] + phosphate</text>
        <dbReference type="Rhea" id="RHEA:47004"/>
        <dbReference type="Rhea" id="RHEA-COMP:11060"/>
        <dbReference type="Rhea" id="RHEA-COMP:11605"/>
        <dbReference type="ChEBI" id="CHEBI:15377"/>
        <dbReference type="ChEBI" id="CHEBI:30013"/>
        <dbReference type="ChEBI" id="CHEBI:43474"/>
        <dbReference type="ChEBI" id="CHEBI:61977"/>
        <dbReference type="EC" id="3.1.3.16"/>
    </reaction>
</comment>
<comment type="catalytic activity">
    <reaction evidence="14">
        <text>O-phospho-L-tyrosyl-[protein] + H2O = L-tyrosyl-[protein] + phosphate</text>
        <dbReference type="Rhea" id="RHEA:10684"/>
        <dbReference type="Rhea" id="RHEA-COMP:10136"/>
        <dbReference type="Rhea" id="RHEA-COMP:20101"/>
        <dbReference type="ChEBI" id="CHEBI:15377"/>
        <dbReference type="ChEBI" id="CHEBI:43474"/>
        <dbReference type="ChEBI" id="CHEBI:46858"/>
        <dbReference type="ChEBI" id="CHEBI:61978"/>
        <dbReference type="EC" id="3.1.3.48"/>
    </reaction>
</comment>
<comment type="catalytic activity">
    <reaction evidence="1">
        <text>1,2-dioctanoyl-sn-glycero-3-phospho-(1D-myo-inositol-3,4,5-trisphosphate) + H2O = 1,2-dioctanoyl-sn-glycero-3-phospho-(1D-myo-inositol-4,5-bisphosphate) + phosphate</text>
        <dbReference type="Rhea" id="RHEA:43552"/>
        <dbReference type="ChEBI" id="CHEBI:15377"/>
        <dbReference type="ChEBI" id="CHEBI:43474"/>
        <dbReference type="ChEBI" id="CHEBI:83416"/>
        <dbReference type="ChEBI" id="CHEBI:83419"/>
    </reaction>
</comment>
<comment type="catalytic activity">
    <reaction evidence="1">
        <text>1,2-dihexadecanoyl-sn-glycero-3-phospho-(1D-myo-inositol-3,4,5-trisphosphate) + H2O = 1,2-dihexadecanoyl-sn-glycero-3-phospho-(1D-myo-inositol-4,5-bisphosphate) + phosphate</text>
        <dbReference type="Rhea" id="RHEA:43560"/>
        <dbReference type="ChEBI" id="CHEBI:15377"/>
        <dbReference type="ChEBI" id="CHEBI:43474"/>
        <dbReference type="ChEBI" id="CHEBI:83420"/>
        <dbReference type="ChEBI" id="CHEBI:83423"/>
    </reaction>
</comment>
<comment type="subunit">
    <text evidence="14 15 19">Interacts (via C-terminus) with vab-1 (via kinase domain); the interaction is independent of vab-1 kinase activity (PubMed:19853560). Interacts with arr-1 and mpz-1; the interaction may inhibit daf-18 (PubMed:20207731). Interacts (via C-terminus) with daf-2 (via kinase domain) (PubMed:23995781).</text>
</comment>
<comment type="interaction">
    <interactant intactId="EBI-2914422">
        <id>G5EE01</id>
    </interactant>
    <interactant intactId="EBI-1788319">
        <id>O61460</id>
        <label>vab-1</label>
    </interactant>
    <organismsDiffer>false</organismsDiffer>
    <experiments>3</experiments>
</comment>
<comment type="subcellular location">
    <subcellularLocation>
        <location evidence="16">Perikaryon</location>
    </subcellularLocation>
    <subcellularLocation>
        <location evidence="18">Cell membrane</location>
        <topology evidence="18">Peripheral membrane protein</topology>
    </subcellularLocation>
    <subcellularLocation>
        <location evidence="16">Cell projection</location>
        <location evidence="16">Axon</location>
    </subcellularLocation>
    <subcellularLocation>
        <location evidence="16">Cell projection</location>
        <location evidence="16">Dendrite</location>
    </subcellularLocation>
    <subcellularLocation>
        <location evidence="18">Cytoplasm</location>
    </subcellularLocation>
    <subcellularLocation>
        <location evidence="18">Nucleus</location>
    </subcellularLocation>
    <text evidence="18">During vulva development, localizes to the cytoplasm and the nucleus of vulva precursor cells and of vulva cells at the Pn.p stage of L2 larvae. From the Pn.px to Pn.pxx stage of L3/L4 larvae, localization increases at the plasma membrane and becomes maximal at the Pn.pxxx stage of L4 larvae.</text>
</comment>
<comment type="tissue specificity">
    <text evidence="9 14 18">Expressed in embryo, larvae and in adult germline (at protein level) (PubMed:16481471, PubMed:19853560, PubMed:22916028). Expressed at equal levels in the 6 vulva precursor cells (VPCs) of L2 larvae and in the descendant cells of the induced VPCs (at protein level) (PubMed:22916028). Expressed in the uterus (at protein level) (PubMed:22916028). Expressed in the Z2/Z3 germline precursors, oocytes, several amphid neurons and weakly in the nerve cord (at protein level) (PubMed:19853560).</text>
</comment>
<comment type="PTM">
    <text evidence="14">Phosphorylated by vab-1 on tyrosine residues which may promote daf-18 degradation.</text>
</comment>
<comment type="disruption phenotype">
    <text evidence="5 6 7 10 13 15 19 22 23">Mutants are viable but with a shorter lifespan. They also fail to enter dauer stage under starvation conditions and 17 percent of mutants display vulval bursting (PubMed:10209098, PubMed:10377431, PubMed:20207731). Unlike in wild-type animals, germline stem cell proliferation continues following sperm depletion and Z2/Z3 germline precursors continue to proliferate during L1 diapause (PubMed:16631584, PubMed:26552888). The number of unfertilized eggs laid after sperm depletion is also increased (PubMed:26552888). Prevents constitutive dauer entry and pharynx remodeling and restores normal brood size in a daf-2 mutant background (PubMed:10209098, PubMed:10377431). Prevents increase in lifespan in an arr-1 (ok401) mutant background or in mpz-1 RNAi-mediated knockdown animals (PubMed:20207731). Suppresses the increase in ovulation rate and mpk-1 phosphorylation in distal oocytes in a vab-1 (dx31) mutant background. Restores normal axon extension of PLM neurons in a daf-2 (e1370) mutant background (PubMed:23995781). RNAi-mediated knockdown prevents arrest at the dauer larval stage in a daf-2 or age-1 mutant background (PubMed:10077613, PubMed:9885576). In addition, suppresses increased thermotolerance and fat storage and reduces daf-16 nuclear localization in a daf-2 mutant background (PubMed:19249087).</text>
</comment>
<comment type="similarity">
    <text evidence="25">Belongs to the PTEN phosphatase protein family.</text>
</comment>
<proteinExistence type="evidence at protein level"/>
<protein>
    <recommendedName>
        <fullName evidence="25">Phosphatidylinositol 3,4,5-trisphosphate 3-phosphatase and dual-specificity protein phosphatase daf-18</fullName>
        <ecNumber evidence="1">3.1.3.16</ecNumber>
        <ecNumber evidence="14">3.1.3.48</ecNumber>
        <ecNumber evidence="26">3.1.3.67</ecNumber>
    </recommendedName>
    <alternativeName>
        <fullName evidence="31">Abnormal dauer formation protein 18</fullName>
    </alternativeName>
</protein>
<name>PTEN_CAEEL</name>
<reference evidence="27" key="1">
    <citation type="journal article" date="1998" name="Mol. Cell">
        <title>The C. elegans PTEN homolog, DAF-18, acts in the insulin receptor-like metabolic signaling pathway.</title>
        <authorList>
            <person name="Ogg S."/>
            <person name="Ruvkun G."/>
        </authorList>
    </citation>
    <scope>NUCLEOTIDE SEQUENCE [MRNA]</scope>
    <scope>FUNCTION</scope>
    <scope>DISRUPTION PHENOTYPE</scope>
</reference>
<reference evidence="29" key="2">
    <citation type="journal article" date="1999" name="Curr. Biol.">
        <title>Regulation of dauer larva development in Caenorhabditis elegans by daf-18, a homologue of the tumour suppressor PTEN.</title>
        <authorList>
            <person name="Rouault J.P."/>
            <person name="Kuwabara P.E."/>
            <person name="Sinilnikova O.M."/>
            <person name="Duret L."/>
            <person name="Thierry-Mieg D."/>
            <person name="Billaud M."/>
        </authorList>
    </citation>
    <scope>NUCLEOTIDE SEQUENCE [MRNA]</scope>
    <scope>FUNCTION</scope>
    <scope>DISRUPTION PHENOTYPE</scope>
</reference>
<reference evidence="28" key="3">
    <citation type="journal article" date="1999" name="Proc. Natl. Acad. Sci. U.S.A.">
        <title>Regulation of the insulin-like developmental pathway of Caenorhabditis elegans by a homolog of the PTEN tumor suppressor gene.</title>
        <authorList>
            <person name="Gil E.B."/>
            <person name="Malone Link E."/>
            <person name="Liu L.X."/>
            <person name="Johnson C.D."/>
            <person name="Lees J.A."/>
        </authorList>
    </citation>
    <scope>NUCLEOTIDE SEQUENCE [MRNA]</scope>
    <scope>FUNCTION</scope>
    <scope>DISRUPTION PHENOTYPE</scope>
</reference>
<reference evidence="30" key="4">
    <citation type="journal article" date="1998" name="Science">
        <title>Genome sequence of the nematode C. elegans: a platform for investigating biology.</title>
        <authorList>
            <consortium name="The C. elegans sequencing consortium"/>
        </authorList>
    </citation>
    <scope>NUCLEOTIDE SEQUENCE [LARGE SCALE GENOMIC DNA]</scope>
    <source>
        <strain evidence="30">Bristol N2</strain>
    </source>
</reference>
<reference evidence="25" key="5">
    <citation type="journal article" date="1999" name="Proc. Natl. Acad. Sci. U.S.A.">
        <title>The PTEN tumor suppressor homolog in Caenorhabditis elegans regulates longevity and dauer formation in an insulin receptor-like signaling pathway.</title>
        <authorList>
            <person name="Mihaylova V.T."/>
            <person name="Borland C.Z."/>
            <person name="Manjarrez L."/>
            <person name="Stern M.J."/>
            <person name="Sun H."/>
        </authorList>
    </citation>
    <scope>FUNCTION</scope>
    <scope>DISRUPTION PHENOTYPE</scope>
</reference>
<reference evidence="25" key="6">
    <citation type="journal article" date="2005" name="Oncogene">
        <title>The human tumour suppressor PTEN regulates longevity and dauer formation in Caenorhabditis elegans.</title>
        <authorList>
            <person name="Solari F."/>
            <person name="Bourbon-Piffaut A."/>
            <person name="Masse I."/>
            <person name="Payrastre B."/>
            <person name="Chan A.M."/>
            <person name="Billaud M."/>
        </authorList>
    </citation>
    <scope>FUNCTION</scope>
    <scope>MUTAGENESIS OF GLY-174</scope>
</reference>
<reference evidence="25" key="7">
    <citation type="journal article" date="2006" name="Curr. Biol.">
        <title>C. elegans DAF-18/PTEN mediates nutrient-dependent arrest of cell cycle and growth in the germline.</title>
        <authorList>
            <person name="Fukuyama M."/>
            <person name="Rougvie A.E."/>
            <person name="Rothman J.H."/>
        </authorList>
    </citation>
    <scope>FUNCTION</scope>
    <scope>DISRUPTION PHENOTYPE</scope>
</reference>
<reference evidence="25" key="8">
    <citation type="journal article" date="2006" name="Genes Dev.">
        <title>Genetic redundancy masks diverse functions of the tumor suppressor gene PTEN during C. elegans development.</title>
        <authorList>
            <person name="Suzuki Y."/>
            <person name="Han M."/>
        </authorList>
    </citation>
    <scope>TISSUE SPECIFICITY</scope>
</reference>
<reference evidence="25" key="9">
    <citation type="journal article" date="2006" name="Neuron">
        <title>The insulin/PI 3-kinase pathway regulates salt chemotaxis learning in Caenorhabditis elegans.</title>
        <authorList>
            <person name="Tomioka M."/>
            <person name="Adachi T."/>
            <person name="Suzuki H."/>
            <person name="Kunitomo H."/>
            <person name="Schafer W.R."/>
            <person name="Iino Y."/>
        </authorList>
    </citation>
    <scope>FUNCTION</scope>
</reference>
<reference key="10">
    <citation type="journal article" date="2008" name="Dev. Biol.">
        <title>Insulin-like signaling negatively regulates muscle arm extension through DAF-12 in Caenorhabditis elegans.</title>
        <authorList>
            <person name="Dixon S.J."/>
            <person name="Alexander M."/>
            <person name="Chan K.K."/>
            <person name="Roy P.J."/>
        </authorList>
    </citation>
    <scope>FUNCTION</scope>
</reference>
<reference evidence="25" key="11">
    <citation type="journal article" date="2009" name="Dev. Cell">
        <title>A role for C. elegans Eph RTK signaling in PTEN regulation.</title>
        <authorList>
            <person name="Brisbin S."/>
            <person name="Liu J."/>
            <person name="Boudreau J."/>
            <person name="Peng J."/>
            <person name="Evangelista M."/>
            <person name="Chin-Sang I."/>
        </authorList>
    </citation>
    <scope>FUNCTION</scope>
    <scope>CATALYTIC ACTIVITY</scope>
    <scope>INTERACTION WITH VAB-1</scope>
    <scope>TISSUE SPECIFICITY</scope>
    <scope>PHOSPHORYLATION</scope>
    <scope>ACTIVE SITE</scope>
    <scope>MUTAGENESIS OF ASP-137 AND CYS-169</scope>
</reference>
<reference evidence="25" key="12">
    <citation type="journal article" date="2009" name="Cell">
        <title>A PP2A regulatory subunit regulates C. elegans insulin/IGF-1 signaling by modulating AKT-1 phosphorylation.</title>
        <authorList>
            <person name="Padmanabhan S."/>
            <person name="Mukhopadhyay A."/>
            <person name="Narasimhan S.D."/>
            <person name="Tesz G."/>
            <person name="Czech M.P."/>
            <person name="Tissenbaum H.A."/>
        </authorList>
    </citation>
    <scope>FUNCTION</scope>
    <scope>DISRUPTION PHENOTYPE</scope>
</reference>
<reference evidence="25" key="13">
    <citation type="journal article" date="2010" name="J. Biol. Chem.">
        <title>Arrestin and the multi-PDZ domain-containing protein MPZ-1 interact with phosphatase and tensin homolog (PTEN) and regulate Caenorhabditis elegans longevity.</title>
        <authorList>
            <person name="Palmitessa A."/>
            <person name="Benovic J.L."/>
        </authorList>
    </citation>
    <scope>FUNCTION</scope>
    <scope>INTERACTION WITH ARR-1 AND MPZ-1</scope>
    <scope>DISRUPTION PHENOTYPE</scope>
</reference>
<reference evidence="25" key="14">
    <citation type="journal article" date="2011" name="Development">
        <title>A conserved PTEN/FOXO pathway regulates neuronal morphology during C. elegans development.</title>
        <authorList>
            <person name="Christensen R."/>
            <person name="de la Torre-Ubieta L."/>
            <person name="Bonni A."/>
            <person name="Colon-Ramos D.A."/>
        </authorList>
    </citation>
    <scope>FUNCTION</scope>
    <scope>SUBCELLULAR LOCATION</scope>
</reference>
<reference key="15">
    <citation type="journal article" date="2012" name="PLoS Genet.">
        <title>Cell-nonautonomous signaling of FOXO/DAF-16 to the stem cells of Caenorhabditis elegans.</title>
        <authorList>
            <person name="Qi W."/>
            <person name="Huang X."/>
            <person name="Neumann-Haefelin E."/>
            <person name="Schulze E."/>
            <person name="Baumeister R."/>
        </authorList>
    </citation>
    <scope>FUNCTION</scope>
</reference>
<reference evidence="25" key="16">
    <citation type="journal article" date="2012" name="PLoS Genet.">
        <title>PTEN negatively regulates MAPK signaling during Caenorhabditis elegans vulval development.</title>
        <authorList>
            <person name="Nakdimon I."/>
            <person name="Walser M."/>
            <person name="Froehli E."/>
            <person name="Hajnal A."/>
        </authorList>
    </citation>
    <scope>FUNCTION</scope>
    <scope>SUBCELLULAR LOCATION</scope>
    <scope>TISSUE SPECIFICITY</scope>
    <scope>MUTAGENESIS OF GLY-174</scope>
</reference>
<reference key="17">
    <citation type="journal article" date="2014" name="Exp. Gerontol.">
        <title>Doxycyclin ameliorates a starvation-induced germline tumor in C. elegans daf-18/PTEN mutant background.</title>
        <authorList>
            <person name="Wolf T."/>
            <person name="Qi W."/>
            <person name="Schindler V."/>
            <person name="Runkel E.D."/>
            <person name="Baumeister R."/>
        </authorList>
    </citation>
    <scope>FUNCTION</scope>
</reference>
<reference key="18">
    <citation type="journal article" date="2014" name="Nat. Struct. Mol. Biol.">
        <title>Caspase-activated phosphoinositide binding by CNT-1 promotes apoptosis by inhibiting the AKT pathway.</title>
        <authorList>
            <person name="Nakagawa A."/>
            <person name="Sullivan K.D."/>
            <person name="Xue D."/>
        </authorList>
    </citation>
    <scope>FUNCTION</scope>
</reference>
<reference key="19">
    <citation type="journal article" date="2014" name="Oncogene">
        <title>Insulin activates the insulin receptor to downregulate the PTEN tumour suppressor.</title>
        <authorList>
            <person name="Liu J."/>
            <person name="Visser-Grieve S."/>
            <person name="Boudreau J."/>
            <person name="Yeung B."/>
            <person name="Lo S."/>
            <person name="Chamberlain G."/>
            <person name="Yu F."/>
            <person name="Sun T."/>
            <person name="Papanicolaou T."/>
            <person name="Lam A."/>
            <person name="Yang X."/>
            <person name="Chin-Sang I."/>
        </authorList>
    </citation>
    <scope>FUNCTION</scope>
    <scope>INTERACTION WITH DAF-2</scope>
    <scope>DISRUPTION PHENOTYPE</scope>
</reference>
<reference key="20">
    <citation type="journal article" date="2015" name="Development">
        <title>DAF-18/PTEN locally antagonizes insulin signalling to couple germline stem cell proliferation to oocyte needs in C. elegans.</title>
        <authorList>
            <person name="Narbonne P."/>
            <person name="Maddox P.S."/>
            <person name="Labbe J.C."/>
        </authorList>
    </citation>
    <scope>FUNCTION</scope>
    <scope>DISRUPTION PHENOTYPE</scope>
</reference>
<organism evidence="30">
    <name type="scientific">Caenorhabditis elegans</name>
    <dbReference type="NCBI Taxonomy" id="6239"/>
    <lineage>
        <taxon>Eukaryota</taxon>
        <taxon>Metazoa</taxon>
        <taxon>Ecdysozoa</taxon>
        <taxon>Nematoda</taxon>
        <taxon>Chromadorea</taxon>
        <taxon>Rhabditida</taxon>
        <taxon>Rhabditina</taxon>
        <taxon>Rhabditomorpha</taxon>
        <taxon>Rhabditoidea</taxon>
        <taxon>Rhabditidae</taxon>
        <taxon>Peloderinae</taxon>
        <taxon>Caenorhabditis</taxon>
    </lineage>
</organism>
<sequence>MVTPPPDVPSTSTRSMARDLQENPNRQPGEPRVSEPYHNSIVERIRHIFRTAVSSNRCRTEYQNIDLDCAYITDRIIAIGYPATGIEANFRNSKVQTQQFLTRRHGKGNVKVFNLRGGYYYDADNFDGNVICFDMTDHHPPSLELMAPFCREAKEWLEADDKHVIAVHCKAGKGRTGVMICALLIYINFYPSPRQILDYYSIIRTKNNKGVTIPSQRRYIYYYHKLRERELNYLPLRMQLIGVYVERPPKTWGGGSKIKVEVGNGSTILFKPDPLIISKSNHQRERATWLNNCDTPNEFDTGEQKYHGFVSKRAYCFMVPEDAPVFVEGDVRIDIREIGFLKKFSDGKIGHVWFNTMFACDGGLNGGHFEYVDKTQPYIGDDTSIGRKNGMRRNETPMRKIDPETGNEFESPWQIVNPPGLEKHITEEQAMENYTNYGMIPPRYTISKILHEKHEKGIVKDDYNDRKLPMGDKSYTESGKSGDIRGVGGPFEIPYKAEEHVLTFPVYEMDRALKSKDLNNGMKLHVVLRCVDTRDSKMMEKSEVFGNLAFHNESTRRLQALTQMNPKWRPEPCAFGSKGAEMHYPPSVRYSSNDGKYNGACSENLVSDFFEHRNIAVLNRYCRYFYKQRSTSRSRYPRKFRYCPLIKKHFYIPADTDDVDENGQPFFHSPEHYIKEQEKIDAEKAAKGIENTGPSTSGSSAPGTIKKTEASQSDKVKPATEDELPPARLPDNVRRFPVVGVDFENPEEESCEHKTVESIAGFEPLEHLFHESYHPNTAGNMLRQDYHTDSEVKIAEQEAKAFVDQLLNGQGVLQEFMKQFKVPSDNSFADYVTGQAEVFKAQIALLEQSEDFQRVQANAEEVDLEHTLGEAFERFGHVVEESNGSSKNPKALKTREQMVKETGKDTQKTRNHVLLHLEANHRVQIERRETCPELHPEDKIPRIAHFSENSFSDSNFDQAIYL</sequence>
<feature type="chain" id="PRO_0000437872" description="Phosphatidylinositol 3,4,5-trisphosphate 3-phosphatase and dual-specificity protein phosphatase daf-18" evidence="25">
    <location>
        <begin position="1"/>
        <end position="962"/>
    </location>
</feature>
<feature type="domain" description="Phosphatase tensin-type" evidence="3">
    <location>
        <begin position="58"/>
        <end position="230"/>
    </location>
</feature>
<feature type="domain" description="C2 tensin-type" evidence="2">
    <location>
        <begin position="234"/>
        <end position="530"/>
    </location>
</feature>
<feature type="region of interest" description="Disordered" evidence="4">
    <location>
        <begin position="1"/>
        <end position="37"/>
    </location>
</feature>
<feature type="region of interest" description="Disordered" evidence="4">
    <location>
        <begin position="382"/>
        <end position="416"/>
    </location>
</feature>
<feature type="region of interest" description="Disordered" evidence="4">
    <location>
        <begin position="689"/>
        <end position="731"/>
    </location>
</feature>
<feature type="compositionally biased region" description="Basic and acidic residues" evidence="4">
    <location>
        <begin position="392"/>
        <end position="403"/>
    </location>
</feature>
<feature type="compositionally biased region" description="Low complexity" evidence="4">
    <location>
        <begin position="692"/>
        <end position="704"/>
    </location>
</feature>
<feature type="compositionally biased region" description="Basic and acidic residues" evidence="4">
    <location>
        <begin position="706"/>
        <end position="720"/>
    </location>
</feature>
<feature type="active site" description="Phosphocysteine intermediate" evidence="3 14">
    <location>
        <position position="169"/>
    </location>
</feature>
<feature type="mutagenesis site" description="Probable loss of phosphatase activity. Stabilizes the interaction with vab-1." evidence="14">
    <original>D</original>
    <variation>A</variation>
    <location>
        <position position="137"/>
    </location>
</feature>
<feature type="mutagenesis site" description="Loss of tyrosine phosphatase activity." evidence="14">
    <original>C</original>
    <variation>S</variation>
    <location>
        <position position="169"/>
    </location>
</feature>
<feature type="mutagenesis site" description="Probable loss of lipid phosphatase activity without affecting protein phosphatase activity. Fails to prevent both constitutive dauer formation and increased lifespan in a daf-2 (e1370) mutant background. Partially increases the percentage of animals lacking a vulva in a let-23 mutant background and partially reduces the number of animals with multiple vulva in a gain-of-function let-60 mutant background." evidence="8 18">
    <original>G</original>
    <variation>E</variation>
    <location>
        <position position="174"/>
    </location>
</feature>
<evidence type="ECO:0000250" key="1">
    <source>
        <dbReference type="UniProtKB" id="P60484"/>
    </source>
</evidence>
<evidence type="ECO:0000255" key="2">
    <source>
        <dbReference type="PROSITE-ProRule" id="PRU00589"/>
    </source>
</evidence>
<evidence type="ECO:0000255" key="3">
    <source>
        <dbReference type="PROSITE-ProRule" id="PRU00590"/>
    </source>
</evidence>
<evidence type="ECO:0000256" key="4">
    <source>
        <dbReference type="SAM" id="MobiDB-lite"/>
    </source>
</evidence>
<evidence type="ECO:0000269" key="5">
    <source>
    </source>
</evidence>
<evidence type="ECO:0000269" key="6">
    <source>
    </source>
</evidence>
<evidence type="ECO:0000269" key="7">
    <source>
    </source>
</evidence>
<evidence type="ECO:0000269" key="8">
    <source>
    </source>
</evidence>
<evidence type="ECO:0000269" key="9">
    <source>
    </source>
</evidence>
<evidence type="ECO:0000269" key="10">
    <source>
    </source>
</evidence>
<evidence type="ECO:0000269" key="11">
    <source>
    </source>
</evidence>
<evidence type="ECO:0000269" key="12">
    <source>
    </source>
</evidence>
<evidence type="ECO:0000269" key="13">
    <source>
    </source>
</evidence>
<evidence type="ECO:0000269" key="14">
    <source>
    </source>
</evidence>
<evidence type="ECO:0000269" key="15">
    <source>
    </source>
</evidence>
<evidence type="ECO:0000269" key="16">
    <source>
    </source>
</evidence>
<evidence type="ECO:0000269" key="17">
    <source>
    </source>
</evidence>
<evidence type="ECO:0000269" key="18">
    <source>
    </source>
</evidence>
<evidence type="ECO:0000269" key="19">
    <source>
    </source>
</evidence>
<evidence type="ECO:0000269" key="20">
    <source>
    </source>
</evidence>
<evidence type="ECO:0000269" key="21">
    <source>
    </source>
</evidence>
<evidence type="ECO:0000269" key="22">
    <source>
    </source>
</evidence>
<evidence type="ECO:0000269" key="23">
    <source>
    </source>
</evidence>
<evidence type="ECO:0000303" key="24">
    <source>
    </source>
</evidence>
<evidence type="ECO:0000305" key="25"/>
<evidence type="ECO:0000305" key="26">
    <source>
    </source>
</evidence>
<evidence type="ECO:0000312" key="27">
    <source>
        <dbReference type="EMBL" id="AAD03420.1"/>
    </source>
</evidence>
<evidence type="ECO:0000312" key="28">
    <source>
        <dbReference type="EMBL" id="AAD21620.1"/>
    </source>
</evidence>
<evidence type="ECO:0000312" key="29">
    <source>
        <dbReference type="EMBL" id="CAA10315.1"/>
    </source>
</evidence>
<evidence type="ECO:0000312" key="30">
    <source>
        <dbReference type="Proteomes" id="UP000001940"/>
    </source>
</evidence>
<evidence type="ECO:0000312" key="31">
    <source>
        <dbReference type="WormBase" id="T07A9.6"/>
    </source>
</evidence>
<gene>
    <name evidence="31" type="primary">daf-18</name>
    <name evidence="31" type="ORF">T07A9.6</name>
</gene>
<keyword id="KW-1003">Cell membrane</keyword>
<keyword id="KW-0966">Cell projection</keyword>
<keyword id="KW-0963">Cytoplasm</keyword>
<keyword id="KW-0378">Hydrolase</keyword>
<keyword id="KW-0443">Lipid metabolism</keyword>
<keyword id="KW-0446">Lipid-binding</keyword>
<keyword id="KW-0472">Membrane</keyword>
<keyword id="KW-0539">Nucleus</keyword>
<keyword id="KW-0597">Phosphoprotein</keyword>
<keyword id="KW-0904">Protein phosphatase</keyword>
<keyword id="KW-1185">Reference proteome</keyword>